<organism>
    <name type="scientific">Canis lupus familiaris</name>
    <name type="common">Dog</name>
    <name type="synonym">Canis familiaris</name>
    <dbReference type="NCBI Taxonomy" id="9615"/>
    <lineage>
        <taxon>Eukaryota</taxon>
        <taxon>Metazoa</taxon>
        <taxon>Chordata</taxon>
        <taxon>Craniata</taxon>
        <taxon>Vertebrata</taxon>
        <taxon>Euteleostomi</taxon>
        <taxon>Mammalia</taxon>
        <taxon>Eutheria</taxon>
        <taxon>Laurasiatheria</taxon>
        <taxon>Carnivora</taxon>
        <taxon>Caniformia</taxon>
        <taxon>Canidae</taxon>
        <taxon>Canis</taxon>
    </lineage>
</organism>
<keyword id="KW-0165">Cleavage on pair of basic residues</keyword>
<keyword id="KW-1015">Disulfide bond</keyword>
<keyword id="KW-0372">Hormone</keyword>
<keyword id="KW-1185">Reference proteome</keyword>
<keyword id="KW-0964">Secreted</keyword>
<keyword id="KW-0732">Signal</keyword>
<keyword id="KW-0838">Vasoactive</keyword>
<gene>
    <name type="primary">NPPB</name>
</gene>
<proteinExistence type="evidence at transcript level"/>
<protein>
    <recommendedName>
        <fullName>Natriuretic peptides B</fullName>
    </recommendedName>
    <alternativeName>
        <fullName evidence="3">Brain natriuretic factor prohormone</fullName>
        <shortName evidence="4">preproBNP</shortName>
        <shortName evidence="3">proBNP</shortName>
    </alternativeName>
    <alternativeName>
        <fullName evidence="1">Gamma-brain natriuretic peptide</fullName>
    </alternativeName>
    <alternativeName>
        <fullName evidence="2">Iso-ANP</fullName>
    </alternativeName>
    <component>
        <recommendedName>
            <fullName>Brain natriuretic peptide 34</fullName>
            <shortName>BNP-34</shortName>
        </recommendedName>
    </component>
    <component>
        <recommendedName>
            <fullName evidence="3">NT-proBNP</fullName>
        </recommendedName>
        <alternativeName>
            <fullName evidence="3">NT-pro-BNP</fullName>
        </alternativeName>
        <alternativeName>
            <fullName evidence="3">NT-proBNP(1-76)</fullName>
        </alternativeName>
    </component>
    <component>
        <recommendedName>
            <fullName evidence="9">Brain natriuretic peptide 32</fullName>
            <shortName evidence="9">BNP(1-32)</shortName>
            <shortName evidence="9">BNP-32</shortName>
        </recommendedName>
        <alternativeName>
            <fullName evidence="7">Brain natriuretic peptide</fullName>
            <shortName evidence="7">BNP</shortName>
        </alternativeName>
    </component>
    <component>
        <recommendedName>
            <fullName>Brain natriuretic peptide 29</fullName>
            <shortName>BNP-29</shortName>
        </recommendedName>
    </component>
</protein>
<dbReference type="EMBL" id="M31777">
    <property type="protein sequence ID" value="AAA30832.1"/>
    <property type="molecule type" value="Genomic_DNA"/>
</dbReference>
<dbReference type="PIR" id="B36736">
    <property type="entry name" value="B36736"/>
</dbReference>
<dbReference type="FunCoup" id="P16859">
    <property type="interactions" value="2"/>
</dbReference>
<dbReference type="PaxDb" id="9612-ENSCAFP00000024316"/>
<dbReference type="eggNOG" id="ENOG502SD0X">
    <property type="taxonomic scope" value="Eukaryota"/>
</dbReference>
<dbReference type="InParanoid" id="P16859"/>
<dbReference type="Proteomes" id="UP000002254">
    <property type="component" value="Unplaced"/>
</dbReference>
<dbReference type="Proteomes" id="UP000694429">
    <property type="component" value="Unplaced"/>
</dbReference>
<dbReference type="Proteomes" id="UP000694542">
    <property type="component" value="Unplaced"/>
</dbReference>
<dbReference type="Proteomes" id="UP000805418">
    <property type="component" value="Unplaced"/>
</dbReference>
<dbReference type="GO" id="GO:0005737">
    <property type="term" value="C:cytoplasm"/>
    <property type="evidence" value="ECO:0000318"/>
    <property type="project" value="GO_Central"/>
</dbReference>
<dbReference type="GO" id="GO:0005615">
    <property type="term" value="C:extracellular space"/>
    <property type="evidence" value="ECO:0000318"/>
    <property type="project" value="GO_Central"/>
</dbReference>
<dbReference type="GO" id="GO:0005179">
    <property type="term" value="F:hormone activity"/>
    <property type="evidence" value="ECO:0000318"/>
    <property type="project" value="GO_Central"/>
</dbReference>
<dbReference type="GO" id="GO:0051427">
    <property type="term" value="F:hormone receptor binding"/>
    <property type="evidence" value="ECO:0000318"/>
    <property type="project" value="GO_Central"/>
</dbReference>
<dbReference type="GO" id="GO:0097746">
    <property type="term" value="P:blood vessel diameter maintenance"/>
    <property type="evidence" value="ECO:0007669"/>
    <property type="project" value="UniProtKB-KW"/>
</dbReference>
<dbReference type="GO" id="GO:0006182">
    <property type="term" value="P:cGMP biosynthetic process"/>
    <property type="evidence" value="ECO:0000250"/>
    <property type="project" value="UniProtKB"/>
</dbReference>
<dbReference type="GO" id="GO:0019934">
    <property type="term" value="P:cGMP-mediated signaling"/>
    <property type="evidence" value="ECO:0000318"/>
    <property type="project" value="GO_Central"/>
</dbReference>
<dbReference type="GO" id="GO:0003085">
    <property type="term" value="P:negative regulation of systemic arterial blood pressure"/>
    <property type="evidence" value="ECO:0000318"/>
    <property type="project" value="GO_Central"/>
</dbReference>
<dbReference type="GO" id="GO:0007218">
    <property type="term" value="P:neuropeptide signaling pathway"/>
    <property type="evidence" value="ECO:0000318"/>
    <property type="project" value="GO_Central"/>
</dbReference>
<dbReference type="GO" id="GO:0007168">
    <property type="term" value="P:receptor guanylyl cyclase signaling pathway"/>
    <property type="evidence" value="ECO:0000250"/>
    <property type="project" value="UniProtKB"/>
</dbReference>
<dbReference type="InterPro" id="IPR000663">
    <property type="entry name" value="Natr_peptide"/>
</dbReference>
<dbReference type="InterPro" id="IPR030480">
    <property type="entry name" value="Natr_peptide_CS"/>
</dbReference>
<dbReference type="InterPro" id="IPR050787">
    <property type="entry name" value="Natriuretic_peptide"/>
</dbReference>
<dbReference type="InterPro" id="IPR002408">
    <property type="entry name" value="Natriuretic_peptide_brain"/>
</dbReference>
<dbReference type="PANTHER" id="PTHR14066">
    <property type="entry name" value="ATRIAL NATRIURETIC FACTOR PRECURSOR"/>
    <property type="match status" value="1"/>
</dbReference>
<dbReference type="PANTHER" id="PTHR14066:SF10">
    <property type="entry name" value="NATRIURETIC PEPTIDES B"/>
    <property type="match status" value="1"/>
</dbReference>
<dbReference type="Pfam" id="PF00212">
    <property type="entry name" value="ANP"/>
    <property type="match status" value="1"/>
</dbReference>
<dbReference type="PRINTS" id="PR00712">
    <property type="entry name" value="BNATPEPTIDE"/>
</dbReference>
<dbReference type="PRINTS" id="PR00710">
    <property type="entry name" value="NATPEPTIDES"/>
</dbReference>
<dbReference type="SMART" id="SM00183">
    <property type="entry name" value="NAT_PEP"/>
    <property type="match status" value="1"/>
</dbReference>
<dbReference type="PROSITE" id="PS00263">
    <property type="entry name" value="NATRIURETIC_PEPTIDE"/>
    <property type="match status" value="1"/>
</dbReference>
<reference key="1">
    <citation type="journal article" date="1989" name="Biochem. Biophys. Res. Commun.">
        <title>Human and canine gene homologs of porcine brain natriuretic peptide.</title>
        <authorList>
            <person name="Seilhamer J.J."/>
            <person name="Arfsten A."/>
            <person name="Miller J.A."/>
            <person name="Lundquist P."/>
            <person name="Scarborough R.M."/>
            <person name="Lewicki J.A."/>
            <person name="Porter J.G."/>
        </authorList>
    </citation>
    <scope>NUCLEOTIDE SEQUENCE [GENOMIC DNA]</scope>
</reference>
<name>ANFB_CANLF</name>
<accession>P16859</accession>
<evidence type="ECO:0000250" key="1">
    <source>
        <dbReference type="UniProtKB" id="P07634"/>
    </source>
</evidence>
<evidence type="ECO:0000250" key="2">
    <source>
        <dbReference type="UniProtKB" id="P13205"/>
    </source>
</evidence>
<evidence type="ECO:0000250" key="3">
    <source>
        <dbReference type="UniProtKB" id="P16860"/>
    </source>
</evidence>
<evidence type="ECO:0000250" key="4">
    <source>
        <dbReference type="UniProtKB" id="P40753"/>
    </source>
</evidence>
<evidence type="ECO:0000255" key="5"/>
<evidence type="ECO:0000256" key="6">
    <source>
        <dbReference type="SAM" id="MobiDB-lite"/>
    </source>
</evidence>
<evidence type="ECO:0000303" key="7">
    <source>
    </source>
</evidence>
<evidence type="ECO:0000305" key="8"/>
<evidence type="ECO:0000305" key="9">
    <source>
    </source>
</evidence>
<sequence length="140" mass="14966">MEPCAALPRALLLLLFLHLSPLGGRPHPLGGRSPASEASEASEASGLWAVQELLGRLKDAVSELQAEQLALEPLHRSHSPAEAPEAGGTPRGVLAPHDSVLQALRRLRSPKMMHKSGCFGRRLDRIGSLSGLGCNVLRKY</sequence>
<comment type="function">
    <molecule>Brain natriuretic peptide 32</molecule>
    <text evidence="3 4">Cardiac hormone that plays a key role in mediating cardio-renal homeostasis (By similarity). May also function as a paracrine antifibrotic factor in the heart (By similarity). Acts by specifically binding and stimulating NPR1 to produce cGMP, which in turn activates effector proteins that drive various biological responses. Involved in regulating the extracellular fluid volume and maintaining the fluid-electrolyte balance through natriuresis, diuresis, vasorelaxation, and inhibition of renin and aldosterone secretion. Binds the clearance receptor NPR3 (By similarity).</text>
</comment>
<comment type="function">
    <molecule>NT-proBNP</molecule>
    <text evidence="3">May affect cardio-renal homeostasis. Able to promote the production of cGMP although its potency is very low compared to brain natriuretic peptide 32.</text>
</comment>
<comment type="subcellular location">
    <subcellularLocation>
        <location evidence="3">Secreted</location>
    </subcellularLocation>
    <text evidence="3">Detected in blood.</text>
</comment>
<comment type="subcellular location">
    <molecule>Brain natriuretic peptide 32</molecule>
    <subcellularLocation>
        <location evidence="3">Secreted</location>
    </subcellularLocation>
    <text evidence="3">Detected in blood.</text>
</comment>
<comment type="tissue specificity">
    <text>Brain and also in atria, but at much lower levels than ANP.</text>
</comment>
<comment type="PTM">
    <text evidence="3">The precursor molecule is proteolytically cleaved by the endoproteases FURIN or CORIN at Arg-108 to produce the brain natriuretic peptide 32. CORIN also cleaves the precursor molecule at additional residues including Arg-105, Arg-108 and possibly Lys-111.</text>
</comment>
<comment type="PTM">
    <molecule>Brain natriuretic peptide 32</molecule>
    <text evidence="3">Undergoes further proteolytic cleavage by various proteases such as DPP4, MME and possibly FAP, to give rise to a variety of shorter peptides. Cleaved at Pro-110 by the prolyl endopeptidase FAP (seprase) activity (in vitro). Degraded by IDE. During IDE degradation, the resulting products initially increase the activation of NPR1 and can also stimulate NPR2 to produce cGMP before the fragments are completely degraded and inactivated by IDE (in vitro).</text>
</comment>
<comment type="similarity">
    <text evidence="8">Belongs to the natriuretic peptide family.</text>
</comment>
<feature type="signal peptide" evidence="5">
    <location>
        <begin position="1"/>
        <end position="26"/>
    </location>
</feature>
<feature type="chain" id="PRO_0000001526" description="Natriuretic peptides B">
    <location>
        <begin position="27"/>
        <end position="140"/>
    </location>
</feature>
<feature type="peptide" id="PRO_0000451935" description="NT-proBNP" evidence="3">
    <location>
        <begin position="27"/>
        <end position="108"/>
    </location>
</feature>
<feature type="peptide" id="PRO_0000001527" description="Brain natriuretic peptide 34">
    <location>
        <begin position="107"/>
        <end position="140"/>
    </location>
</feature>
<feature type="peptide" id="PRO_0000451936" description="Brain natriuretic peptide 32" evidence="3">
    <location>
        <begin position="109"/>
        <end position="140"/>
    </location>
</feature>
<feature type="peptide" id="PRO_0000001528" description="Brain natriuretic peptide 29">
    <location>
        <begin position="112"/>
        <end position="140"/>
    </location>
</feature>
<feature type="region of interest" description="Disordered" evidence="6">
    <location>
        <begin position="71"/>
        <end position="94"/>
    </location>
</feature>
<feature type="site" description="Cleavage; by CORIN" evidence="3">
    <location>
        <begin position="105"/>
        <end position="106"/>
    </location>
</feature>
<feature type="site" description="Cleavage; by FURIN or CORIN" evidence="3">
    <location>
        <begin position="108"/>
        <end position="109"/>
    </location>
</feature>
<feature type="site" description="Cleavage; by FAP" evidence="3">
    <location>
        <begin position="110"/>
        <end position="111"/>
    </location>
</feature>
<feature type="site" description="Cleavage; by CORIN" evidence="3">
    <location>
        <begin position="111"/>
        <end position="112"/>
    </location>
</feature>
<feature type="disulfide bond" evidence="3">
    <location>
        <begin position="118"/>
        <end position="134"/>
    </location>
</feature>